<gene>
    <name type="primary">smp</name>
    <name type="ordered locus">STY4924</name>
    <name type="ordered locus">t4616</name>
</gene>
<reference key="1">
    <citation type="journal article" date="2001" name="Nature">
        <title>Complete genome sequence of a multiple drug resistant Salmonella enterica serovar Typhi CT18.</title>
        <authorList>
            <person name="Parkhill J."/>
            <person name="Dougan G."/>
            <person name="James K.D."/>
            <person name="Thomson N.R."/>
            <person name="Pickard D."/>
            <person name="Wain J."/>
            <person name="Churcher C.M."/>
            <person name="Mungall K.L."/>
            <person name="Bentley S.D."/>
            <person name="Holden M.T.G."/>
            <person name="Sebaihia M."/>
            <person name="Baker S."/>
            <person name="Basham D."/>
            <person name="Brooks K."/>
            <person name="Chillingworth T."/>
            <person name="Connerton P."/>
            <person name="Cronin A."/>
            <person name="Davis P."/>
            <person name="Davies R.M."/>
            <person name="Dowd L."/>
            <person name="White N."/>
            <person name="Farrar J."/>
            <person name="Feltwell T."/>
            <person name="Hamlin N."/>
            <person name="Haque A."/>
            <person name="Hien T.T."/>
            <person name="Holroyd S."/>
            <person name="Jagels K."/>
            <person name="Krogh A."/>
            <person name="Larsen T.S."/>
            <person name="Leather S."/>
            <person name="Moule S."/>
            <person name="O'Gaora P."/>
            <person name="Parry C."/>
            <person name="Quail M.A."/>
            <person name="Rutherford K.M."/>
            <person name="Simmonds M."/>
            <person name="Skelton J."/>
            <person name="Stevens K."/>
            <person name="Whitehead S."/>
            <person name="Barrell B.G."/>
        </authorList>
    </citation>
    <scope>NUCLEOTIDE SEQUENCE [LARGE SCALE GENOMIC DNA]</scope>
    <source>
        <strain>CT18</strain>
    </source>
</reference>
<reference key="2">
    <citation type="journal article" date="2003" name="J. Bacteriol.">
        <title>Comparative genomics of Salmonella enterica serovar Typhi strains Ty2 and CT18.</title>
        <authorList>
            <person name="Deng W."/>
            <person name="Liou S.-R."/>
            <person name="Plunkett G. III"/>
            <person name="Mayhew G.F."/>
            <person name="Rose D.J."/>
            <person name="Burland V."/>
            <person name="Kodoyianni V."/>
            <person name="Schwartz D.C."/>
            <person name="Blattner F.R."/>
        </authorList>
    </citation>
    <scope>NUCLEOTIDE SEQUENCE [LARGE SCALE GENOMIC DNA]</scope>
    <source>
        <strain>ATCC 700931 / Ty2</strain>
    </source>
</reference>
<proteinExistence type="inferred from homology"/>
<comment type="subcellular location">
    <subcellularLocation>
        <location evidence="1">Cell membrane</location>
        <topology evidence="1">Single-pass membrane protein</topology>
    </subcellularLocation>
</comment>
<comment type="similarity">
    <text evidence="3">Belongs to the Smp family.</text>
</comment>
<name>SMP_SALTI</name>
<dbReference type="EMBL" id="AL513382">
    <property type="protein sequence ID" value="CAD03408.1"/>
    <property type="molecule type" value="Genomic_DNA"/>
</dbReference>
<dbReference type="EMBL" id="AE014613">
    <property type="protein sequence ID" value="AAO72048.1"/>
    <property type="molecule type" value="Genomic_DNA"/>
</dbReference>
<dbReference type="RefSeq" id="NP_458985.1">
    <property type="nucleotide sequence ID" value="NC_003198.1"/>
</dbReference>
<dbReference type="RefSeq" id="WP_000090067.1">
    <property type="nucleotide sequence ID" value="NZ_WSUR01000014.1"/>
</dbReference>
<dbReference type="SMR" id="Q8Z0T9"/>
<dbReference type="STRING" id="220341.gene:17588742"/>
<dbReference type="KEGG" id="stt:t4616"/>
<dbReference type="KEGG" id="sty:STY4924"/>
<dbReference type="PATRIC" id="fig|220341.7.peg.5045"/>
<dbReference type="eggNOG" id="COG3726">
    <property type="taxonomic scope" value="Bacteria"/>
</dbReference>
<dbReference type="HOGENOM" id="CLU_093836_0_0_6"/>
<dbReference type="OMA" id="RQVDNTT"/>
<dbReference type="OrthoDB" id="6506836at2"/>
<dbReference type="Proteomes" id="UP000000541">
    <property type="component" value="Chromosome"/>
</dbReference>
<dbReference type="Proteomes" id="UP000002670">
    <property type="component" value="Chromosome"/>
</dbReference>
<dbReference type="GO" id="GO:0005886">
    <property type="term" value="C:plasma membrane"/>
    <property type="evidence" value="ECO:0007669"/>
    <property type="project" value="UniProtKB-SubCell"/>
</dbReference>
<dbReference type="InterPro" id="IPR019305">
    <property type="entry name" value="Uncharacterised_Smp"/>
</dbReference>
<dbReference type="NCBIfam" id="NF008419">
    <property type="entry name" value="PRK11246.1"/>
    <property type="match status" value="1"/>
</dbReference>
<dbReference type="Pfam" id="PF10144">
    <property type="entry name" value="SMP_2"/>
    <property type="match status" value="1"/>
</dbReference>
<protein>
    <recommendedName>
        <fullName>Protein Smp</fullName>
    </recommendedName>
</protein>
<sequence>MARAKLKFRLHRAVIVLFCLTLLVALMQGASWFSQNHQRQRNPQLEELARTLARQVTLNIAPLMRSETPDENRINAVLRQLTQESRILDAGVYDEQGDLITRAGESVNVRDRLALDGKKAGSYFNQQIVEPIQGKNGPLGYLRLTLDTHTLATEAKQVDNTTNILRLMLLLSLAIGVVLTRTLLQGKRTRWQQSPFLLTASKPVPEEEEREEKE</sequence>
<feature type="signal peptide" evidence="2">
    <location>
        <begin position="1"/>
        <end position="30"/>
    </location>
</feature>
<feature type="chain" id="PRO_0000032804" description="Protein Smp">
    <location>
        <begin position="31"/>
        <end position="214"/>
    </location>
</feature>
<feature type="transmembrane region" description="Helical" evidence="2">
    <location>
        <begin position="164"/>
        <end position="184"/>
    </location>
</feature>
<organism>
    <name type="scientific">Salmonella typhi</name>
    <dbReference type="NCBI Taxonomy" id="90370"/>
    <lineage>
        <taxon>Bacteria</taxon>
        <taxon>Pseudomonadati</taxon>
        <taxon>Pseudomonadota</taxon>
        <taxon>Gammaproteobacteria</taxon>
        <taxon>Enterobacterales</taxon>
        <taxon>Enterobacteriaceae</taxon>
        <taxon>Salmonella</taxon>
    </lineage>
</organism>
<evidence type="ECO:0000250" key="1"/>
<evidence type="ECO:0000255" key="2"/>
<evidence type="ECO:0000305" key="3"/>
<accession>Q8Z0T9</accession>
<keyword id="KW-1003">Cell membrane</keyword>
<keyword id="KW-0472">Membrane</keyword>
<keyword id="KW-0732">Signal</keyword>
<keyword id="KW-0812">Transmembrane</keyword>
<keyword id="KW-1133">Transmembrane helix</keyword>